<gene>
    <name evidence="1" type="primary">hslO</name>
    <name type="ordered locus">SPG_2129</name>
</gene>
<organism>
    <name type="scientific">Streptococcus pneumoniae serotype 19F (strain G54)</name>
    <dbReference type="NCBI Taxonomy" id="512566"/>
    <lineage>
        <taxon>Bacteria</taxon>
        <taxon>Bacillati</taxon>
        <taxon>Bacillota</taxon>
        <taxon>Bacilli</taxon>
        <taxon>Lactobacillales</taxon>
        <taxon>Streptococcaceae</taxon>
        <taxon>Streptococcus</taxon>
    </lineage>
</organism>
<evidence type="ECO:0000255" key="1">
    <source>
        <dbReference type="HAMAP-Rule" id="MF_00117"/>
    </source>
</evidence>
<sequence>MDKIIKTISESGAFRAFVLDSTETVRTAQEKHQTQASSTVALGRTLIASQILAANEKGNTKLTVKVLGSSSLGAIITVADTKGNVKGYVQNPGVDIKKTATGEVLVGPFVGNGQFLVITDYGAGNPYNSITPLISGEIGEDLAFYLTESQQTPSAVGLNVLLDEEDKVKVAGGFLVQVLPGAKKEEIARFEKRIQEMPAISTLLESDDHIEALLKAIYGDEAYKRLSEEEIRFQCDCSHERFMNALASLPSSDLQEMKEEDHGAEITCQFCQTTYNFDEKDLEELIRDKS</sequence>
<accession>B5E3S9</accession>
<name>HSLO_STRP4</name>
<comment type="function">
    <text evidence="1">Redox regulated molecular chaperone. Protects both thermally unfolding and oxidatively damaged proteins from irreversible aggregation. Plays an important role in the bacterial defense system toward oxidative stress.</text>
</comment>
<comment type="subcellular location">
    <subcellularLocation>
        <location evidence="1">Cytoplasm</location>
    </subcellularLocation>
</comment>
<comment type="PTM">
    <text evidence="1">Under oxidizing conditions two disulfide bonds are formed involving the reactive cysteines. Under reducing conditions zinc is bound to the reactive cysteines and the protein is inactive.</text>
</comment>
<comment type="similarity">
    <text evidence="1">Belongs to the HSP33 family.</text>
</comment>
<feature type="chain" id="PRO_1000095032" description="33 kDa chaperonin">
    <location>
        <begin position="1"/>
        <end position="290"/>
    </location>
</feature>
<feature type="disulfide bond" description="Redox-active" evidence="1">
    <location>
        <begin position="235"/>
        <end position="237"/>
    </location>
</feature>
<feature type="disulfide bond" description="Redox-active" evidence="1">
    <location>
        <begin position="268"/>
        <end position="271"/>
    </location>
</feature>
<reference key="1">
    <citation type="journal article" date="2001" name="Microb. Drug Resist.">
        <title>Annotated draft genomic sequence from a Streptococcus pneumoniae type 19F clinical isolate.</title>
        <authorList>
            <person name="Dopazo J."/>
            <person name="Mendoza A."/>
            <person name="Herrero J."/>
            <person name="Caldara F."/>
            <person name="Humbert Y."/>
            <person name="Friedli L."/>
            <person name="Guerrier M."/>
            <person name="Grand-Schenk E."/>
            <person name="Gandin C."/>
            <person name="de Francesco M."/>
            <person name="Polissi A."/>
            <person name="Buell G."/>
            <person name="Feger G."/>
            <person name="Garcia E."/>
            <person name="Peitsch M."/>
            <person name="Garcia-Bustos J.F."/>
        </authorList>
    </citation>
    <scope>NUCLEOTIDE SEQUENCE [LARGE SCALE GENOMIC DNA]</scope>
    <source>
        <strain>G54</strain>
    </source>
</reference>
<reference key="2">
    <citation type="submission" date="2008-03" db="EMBL/GenBank/DDBJ databases">
        <title>Pneumococcal beta glucoside metabolism investigated by whole genome comparison.</title>
        <authorList>
            <person name="Mulas L."/>
            <person name="Trappetti C."/>
            <person name="Hakenbeck R."/>
            <person name="Iannelli F."/>
            <person name="Pozzi G."/>
            <person name="Davidsen T.M."/>
            <person name="Tettelin H."/>
            <person name="Oggioni M."/>
        </authorList>
    </citation>
    <scope>NUCLEOTIDE SEQUENCE [LARGE SCALE GENOMIC DNA]</scope>
    <source>
        <strain>G54</strain>
    </source>
</reference>
<proteinExistence type="inferred from homology"/>
<dbReference type="EMBL" id="CP001015">
    <property type="protein sequence ID" value="ACF54882.1"/>
    <property type="molecule type" value="Genomic_DNA"/>
</dbReference>
<dbReference type="SMR" id="B5E3S9"/>
<dbReference type="KEGG" id="spx:SPG_2129"/>
<dbReference type="HOGENOM" id="CLU_054493_1_0_9"/>
<dbReference type="GO" id="GO:0005737">
    <property type="term" value="C:cytoplasm"/>
    <property type="evidence" value="ECO:0007669"/>
    <property type="project" value="UniProtKB-SubCell"/>
</dbReference>
<dbReference type="GO" id="GO:0044183">
    <property type="term" value="F:protein folding chaperone"/>
    <property type="evidence" value="ECO:0007669"/>
    <property type="project" value="TreeGrafter"/>
</dbReference>
<dbReference type="GO" id="GO:0051082">
    <property type="term" value="F:unfolded protein binding"/>
    <property type="evidence" value="ECO:0007669"/>
    <property type="project" value="UniProtKB-UniRule"/>
</dbReference>
<dbReference type="GO" id="GO:0042026">
    <property type="term" value="P:protein refolding"/>
    <property type="evidence" value="ECO:0007669"/>
    <property type="project" value="TreeGrafter"/>
</dbReference>
<dbReference type="CDD" id="cd00498">
    <property type="entry name" value="Hsp33"/>
    <property type="match status" value="1"/>
</dbReference>
<dbReference type="Gene3D" id="3.55.30.10">
    <property type="entry name" value="Hsp33 domain"/>
    <property type="match status" value="1"/>
</dbReference>
<dbReference type="Gene3D" id="3.90.1280.10">
    <property type="entry name" value="HSP33 redox switch-like"/>
    <property type="match status" value="1"/>
</dbReference>
<dbReference type="HAMAP" id="MF_00117">
    <property type="entry name" value="HslO"/>
    <property type="match status" value="1"/>
</dbReference>
<dbReference type="InterPro" id="IPR000397">
    <property type="entry name" value="Heat_shock_Hsp33"/>
</dbReference>
<dbReference type="InterPro" id="IPR016154">
    <property type="entry name" value="Heat_shock_Hsp33_C"/>
</dbReference>
<dbReference type="InterPro" id="IPR016153">
    <property type="entry name" value="Heat_shock_Hsp33_N"/>
</dbReference>
<dbReference type="NCBIfam" id="NF001033">
    <property type="entry name" value="PRK00114.1"/>
    <property type="match status" value="1"/>
</dbReference>
<dbReference type="PANTHER" id="PTHR30111">
    <property type="entry name" value="33 KDA CHAPERONIN"/>
    <property type="match status" value="1"/>
</dbReference>
<dbReference type="PANTHER" id="PTHR30111:SF1">
    <property type="entry name" value="33 KDA CHAPERONIN"/>
    <property type="match status" value="1"/>
</dbReference>
<dbReference type="Pfam" id="PF01430">
    <property type="entry name" value="HSP33"/>
    <property type="match status" value="1"/>
</dbReference>
<dbReference type="PIRSF" id="PIRSF005261">
    <property type="entry name" value="Heat_shock_Hsp33"/>
    <property type="match status" value="1"/>
</dbReference>
<dbReference type="SUPFAM" id="SSF64397">
    <property type="entry name" value="Hsp33 domain"/>
    <property type="match status" value="1"/>
</dbReference>
<dbReference type="SUPFAM" id="SSF118352">
    <property type="entry name" value="HSP33 redox switch-like"/>
    <property type="match status" value="1"/>
</dbReference>
<keyword id="KW-0143">Chaperone</keyword>
<keyword id="KW-0963">Cytoplasm</keyword>
<keyword id="KW-1015">Disulfide bond</keyword>
<keyword id="KW-0676">Redox-active center</keyword>
<keyword id="KW-0862">Zinc</keyword>
<protein>
    <recommendedName>
        <fullName evidence="1">33 kDa chaperonin</fullName>
    </recommendedName>
    <alternativeName>
        <fullName evidence="1">Heat shock protein 33 homolog</fullName>
        <shortName evidence="1">HSP33</shortName>
    </alternativeName>
</protein>